<evidence type="ECO:0000255" key="1">
    <source>
        <dbReference type="HAMAP-Rule" id="MF_00930"/>
    </source>
</evidence>
<evidence type="ECO:0000305" key="2"/>
<protein>
    <recommendedName>
        <fullName evidence="1">Transcription elongation factor GreB</fullName>
    </recommendedName>
    <alternativeName>
        <fullName evidence="1">Transcript cleavage factor GreB</fullName>
    </alternativeName>
</protein>
<feature type="chain" id="PRO_0000176926" description="Transcription elongation factor GreB">
    <location>
        <begin position="1"/>
        <end position="158"/>
    </location>
</feature>
<proteinExistence type="inferred from homology"/>
<reference key="1">
    <citation type="journal article" date="2001" name="Nature">
        <title>Genome sequence of enterohaemorrhagic Escherichia coli O157:H7.</title>
        <authorList>
            <person name="Perna N.T."/>
            <person name="Plunkett G. III"/>
            <person name="Burland V."/>
            <person name="Mau B."/>
            <person name="Glasner J.D."/>
            <person name="Rose D.J."/>
            <person name="Mayhew G.F."/>
            <person name="Evans P.S."/>
            <person name="Gregor J."/>
            <person name="Kirkpatrick H.A."/>
            <person name="Posfai G."/>
            <person name="Hackett J."/>
            <person name="Klink S."/>
            <person name="Boutin A."/>
            <person name="Shao Y."/>
            <person name="Miller L."/>
            <person name="Grotbeck E.J."/>
            <person name="Davis N.W."/>
            <person name="Lim A."/>
            <person name="Dimalanta E.T."/>
            <person name="Potamousis K."/>
            <person name="Apodaca J."/>
            <person name="Anantharaman T.S."/>
            <person name="Lin J."/>
            <person name="Yen G."/>
            <person name="Schwartz D.C."/>
            <person name="Welch R.A."/>
            <person name="Blattner F.R."/>
        </authorList>
    </citation>
    <scope>NUCLEOTIDE SEQUENCE [LARGE SCALE GENOMIC DNA]</scope>
    <source>
        <strain>O157:H7 / EDL933 / ATCC 700927 / EHEC</strain>
    </source>
</reference>
<reference key="2">
    <citation type="journal article" date="2001" name="DNA Res.">
        <title>Complete genome sequence of enterohemorrhagic Escherichia coli O157:H7 and genomic comparison with a laboratory strain K-12.</title>
        <authorList>
            <person name="Hayashi T."/>
            <person name="Makino K."/>
            <person name="Ohnishi M."/>
            <person name="Kurokawa K."/>
            <person name="Ishii K."/>
            <person name="Yokoyama K."/>
            <person name="Han C.-G."/>
            <person name="Ohtsubo E."/>
            <person name="Nakayama K."/>
            <person name="Murata T."/>
            <person name="Tanaka M."/>
            <person name="Tobe T."/>
            <person name="Iida T."/>
            <person name="Takami H."/>
            <person name="Honda T."/>
            <person name="Sasakawa C."/>
            <person name="Ogasawara N."/>
            <person name="Yasunaga T."/>
            <person name="Kuhara S."/>
            <person name="Shiba T."/>
            <person name="Hattori M."/>
            <person name="Shinagawa H."/>
        </authorList>
    </citation>
    <scope>NUCLEOTIDE SEQUENCE [LARGE SCALE GENOMIC DNA]</scope>
    <source>
        <strain>O157:H7 / Sakai / RIMD 0509952 / EHEC</strain>
    </source>
</reference>
<keyword id="KW-0238">DNA-binding</keyword>
<keyword id="KW-1185">Reference proteome</keyword>
<keyword id="KW-0804">Transcription</keyword>
<keyword id="KW-0805">Transcription regulation</keyword>
<sequence length="158" mass="18545">MKTPLVTREGYEKLKQELNYLWREERPEVTKKVTWAASLGDRSENADYQYNKKRLREIDRRVRYLTKCMENLKIVDYSPQQEGKVFFGAWVEIENDDGVTHRFRIVGYDEIFGRKDYISIDSPMARALLKKEVGDLAVVNTPAGEASWYVNAIEYVKP</sequence>
<comment type="function">
    <text evidence="1">Necessary for efficient RNA polymerase transcription elongation past template-encoded arresting sites. The arresting sites in DNA have the property of trapping a certain fraction of elongating RNA polymerases that pass through, resulting in locked ternary complexes. Cleavage of the nascent transcript by cleavage factors such as GreA or GreB allows the resumption of elongation from the new 3'terminus. GreB releases sequences of up to 9 nucleotides in length.</text>
</comment>
<comment type="similarity">
    <text evidence="1">Belongs to the GreA/GreB family. GreB subfamily.</text>
</comment>
<comment type="sequence caution" evidence="2">
    <conflict type="erroneous initiation">
        <sequence resource="EMBL-CDS" id="AAG58507"/>
    </conflict>
    <text>Extended N-terminus.</text>
</comment>
<accession>P64274</accession>
<accession>Q8X729</accession>
<organism>
    <name type="scientific">Escherichia coli O157:H7</name>
    <dbReference type="NCBI Taxonomy" id="83334"/>
    <lineage>
        <taxon>Bacteria</taxon>
        <taxon>Pseudomonadati</taxon>
        <taxon>Pseudomonadota</taxon>
        <taxon>Gammaproteobacteria</taxon>
        <taxon>Enterobacterales</taxon>
        <taxon>Enterobacteriaceae</taxon>
        <taxon>Escherichia</taxon>
    </lineage>
</organism>
<dbReference type="EMBL" id="AE005174">
    <property type="protein sequence ID" value="AAG58507.1"/>
    <property type="status" value="ALT_INIT"/>
    <property type="molecule type" value="Genomic_DNA"/>
</dbReference>
<dbReference type="EMBL" id="BA000007">
    <property type="protein sequence ID" value="BAB37671.2"/>
    <property type="molecule type" value="Genomic_DNA"/>
</dbReference>
<dbReference type="PIR" id="G86005">
    <property type="entry name" value="G86005"/>
</dbReference>
<dbReference type="PIR" id="H91159">
    <property type="entry name" value="H91159"/>
</dbReference>
<dbReference type="RefSeq" id="NP_312275.2">
    <property type="nucleotide sequence ID" value="NC_002695.1"/>
</dbReference>
<dbReference type="RefSeq" id="WP_000856744.1">
    <property type="nucleotide sequence ID" value="NZ_VOAI01000004.1"/>
</dbReference>
<dbReference type="SMR" id="P64274"/>
<dbReference type="STRING" id="155864.Z4761"/>
<dbReference type="GeneID" id="86862196"/>
<dbReference type="GeneID" id="915895"/>
<dbReference type="KEGG" id="ece:Z4761"/>
<dbReference type="KEGG" id="ecs:ECs_4248"/>
<dbReference type="PATRIC" id="fig|386585.9.peg.4436"/>
<dbReference type="eggNOG" id="COG0782">
    <property type="taxonomic scope" value="Bacteria"/>
</dbReference>
<dbReference type="HOGENOM" id="CLU_101379_3_0_6"/>
<dbReference type="OMA" id="DEIYGRN"/>
<dbReference type="Proteomes" id="UP000000558">
    <property type="component" value="Chromosome"/>
</dbReference>
<dbReference type="Proteomes" id="UP000002519">
    <property type="component" value="Chromosome"/>
</dbReference>
<dbReference type="GO" id="GO:0003677">
    <property type="term" value="F:DNA binding"/>
    <property type="evidence" value="ECO:0007669"/>
    <property type="project" value="UniProtKB-UniRule"/>
</dbReference>
<dbReference type="GO" id="GO:0070063">
    <property type="term" value="F:RNA polymerase binding"/>
    <property type="evidence" value="ECO:0007669"/>
    <property type="project" value="InterPro"/>
</dbReference>
<dbReference type="GO" id="GO:0006354">
    <property type="term" value="P:DNA-templated transcription elongation"/>
    <property type="evidence" value="ECO:0007669"/>
    <property type="project" value="TreeGrafter"/>
</dbReference>
<dbReference type="GO" id="GO:0032784">
    <property type="term" value="P:regulation of DNA-templated transcription elongation"/>
    <property type="evidence" value="ECO:0007669"/>
    <property type="project" value="UniProtKB-UniRule"/>
</dbReference>
<dbReference type="FunFam" id="1.10.287.180:FF:000001">
    <property type="entry name" value="Transcription elongation factor GreA"/>
    <property type="match status" value="1"/>
</dbReference>
<dbReference type="FunFam" id="3.10.50.30:FF:000001">
    <property type="entry name" value="Transcription elongation factor GreA"/>
    <property type="match status" value="1"/>
</dbReference>
<dbReference type="Gene3D" id="3.10.50.30">
    <property type="entry name" value="Transcription elongation factor, GreA/GreB, C-terminal domain"/>
    <property type="match status" value="1"/>
</dbReference>
<dbReference type="Gene3D" id="1.10.287.180">
    <property type="entry name" value="Transcription elongation factor, GreA/GreB, N-terminal domain"/>
    <property type="match status" value="1"/>
</dbReference>
<dbReference type="HAMAP" id="MF_00105">
    <property type="entry name" value="GreA_GreB"/>
    <property type="match status" value="1"/>
</dbReference>
<dbReference type="HAMAP" id="MF_00930">
    <property type="entry name" value="GreB"/>
    <property type="match status" value="1"/>
</dbReference>
<dbReference type="InterPro" id="IPR036953">
    <property type="entry name" value="GreA/GreB_C_sf"/>
</dbReference>
<dbReference type="InterPro" id="IPR018151">
    <property type="entry name" value="TF_GreA/GreB_CS"/>
</dbReference>
<dbReference type="InterPro" id="IPR028624">
    <property type="entry name" value="Tscrpt_elong_fac_GreA/B"/>
</dbReference>
<dbReference type="InterPro" id="IPR001437">
    <property type="entry name" value="Tscrpt_elong_fac_GreA/B_C"/>
</dbReference>
<dbReference type="InterPro" id="IPR023459">
    <property type="entry name" value="Tscrpt_elong_fac_GreA/B_fam"/>
</dbReference>
<dbReference type="InterPro" id="IPR022691">
    <property type="entry name" value="Tscrpt_elong_fac_GreA/B_N"/>
</dbReference>
<dbReference type="InterPro" id="IPR036805">
    <property type="entry name" value="Tscrpt_elong_fac_GreA/B_N_sf"/>
</dbReference>
<dbReference type="InterPro" id="IPR006358">
    <property type="entry name" value="Tscrpt_elong_fac_GreB"/>
</dbReference>
<dbReference type="NCBIfam" id="TIGR01461">
    <property type="entry name" value="greB"/>
    <property type="match status" value="1"/>
</dbReference>
<dbReference type="NCBIfam" id="NF002506">
    <property type="entry name" value="PRK01885.1"/>
    <property type="match status" value="1"/>
</dbReference>
<dbReference type="PANTHER" id="PTHR30437">
    <property type="entry name" value="TRANSCRIPTION ELONGATION FACTOR GREA"/>
    <property type="match status" value="1"/>
</dbReference>
<dbReference type="PANTHER" id="PTHR30437:SF6">
    <property type="entry name" value="TRANSCRIPTION ELONGATION FACTOR GREB"/>
    <property type="match status" value="1"/>
</dbReference>
<dbReference type="Pfam" id="PF01272">
    <property type="entry name" value="GreA_GreB"/>
    <property type="match status" value="1"/>
</dbReference>
<dbReference type="Pfam" id="PF03449">
    <property type="entry name" value="GreA_GreB_N"/>
    <property type="match status" value="1"/>
</dbReference>
<dbReference type="PIRSF" id="PIRSF006092">
    <property type="entry name" value="GreA_GreB"/>
    <property type="match status" value="1"/>
</dbReference>
<dbReference type="SUPFAM" id="SSF54534">
    <property type="entry name" value="FKBP-like"/>
    <property type="match status" value="1"/>
</dbReference>
<dbReference type="SUPFAM" id="SSF46557">
    <property type="entry name" value="GreA transcript cleavage protein, N-terminal domain"/>
    <property type="match status" value="1"/>
</dbReference>
<dbReference type="PROSITE" id="PS00829">
    <property type="entry name" value="GREAB_1"/>
    <property type="match status" value="1"/>
</dbReference>
<dbReference type="PROSITE" id="PS00830">
    <property type="entry name" value="GREAB_2"/>
    <property type="match status" value="1"/>
</dbReference>
<gene>
    <name evidence="1" type="primary">greB</name>
    <name type="ordered locus">Z4761</name>
    <name type="ordered locus">ECs4248</name>
</gene>
<name>GREB_ECO57</name>